<name>CAID_SALPK</name>
<organism>
    <name type="scientific">Salmonella paratyphi A (strain AKU_12601)</name>
    <dbReference type="NCBI Taxonomy" id="554290"/>
    <lineage>
        <taxon>Bacteria</taxon>
        <taxon>Pseudomonadati</taxon>
        <taxon>Pseudomonadota</taxon>
        <taxon>Gammaproteobacteria</taxon>
        <taxon>Enterobacterales</taxon>
        <taxon>Enterobacteriaceae</taxon>
        <taxon>Salmonella</taxon>
    </lineage>
</organism>
<feature type="chain" id="PRO_1000136266" description="Carnitinyl-CoA dehydratase">
    <location>
        <begin position="1"/>
        <end position="261"/>
    </location>
</feature>
<feature type="active site" description="Nucleophile" evidence="1">
    <location>
        <position position="111"/>
    </location>
</feature>
<feature type="active site" description="Proton acceptor" evidence="1">
    <location>
        <position position="131"/>
    </location>
</feature>
<comment type="function">
    <text evidence="1">Catalyzes the reversible dehydration of L-carnitinyl-CoA to crotonobetainyl-CoA.</text>
</comment>
<comment type="catalytic activity">
    <reaction evidence="1">
        <text>(R)-carnitinyl-CoA = crotonobetainyl-CoA + H2O</text>
        <dbReference type="Rhea" id="RHEA:28338"/>
        <dbReference type="ChEBI" id="CHEBI:15377"/>
        <dbReference type="ChEBI" id="CHEBI:60932"/>
        <dbReference type="ChEBI" id="CHEBI:60933"/>
        <dbReference type="EC" id="4.2.1.149"/>
    </reaction>
</comment>
<comment type="pathway">
    <text evidence="1">Amine and polyamine metabolism; carnitine metabolism.</text>
</comment>
<comment type="similarity">
    <text evidence="1">Belongs to the enoyl-CoA hydratase/isomerase family.</text>
</comment>
<evidence type="ECO:0000255" key="1">
    <source>
        <dbReference type="HAMAP-Rule" id="MF_01051"/>
    </source>
</evidence>
<protein>
    <recommendedName>
        <fullName evidence="1">Carnitinyl-CoA dehydratase</fullName>
        <ecNumber evidence="1">4.2.1.149</ecNumber>
    </recommendedName>
    <alternativeName>
        <fullName evidence="1">Crotonobetainyl-CoA hydratase</fullName>
    </alternativeName>
</protein>
<sequence>MSESLHLTRNGPILEITLDRPKANAIDAKTSFAMGEAFLNFRDDPELRVAIITGGGEKFFSAGWDLKAAAEGEAPDADFGPGGFAGLTEIFDLDKPVIAAVNGYAFGGGFELALAADFIVCAENASFALPEAKLGIVPDSGGVLRLPKLLPPAIVNEMVMTGRRMSAEEALRWGIVNRVVSQSELMDSARELAQQLVNSAPLAIAALKEIYRATSEMPVEEGYRYIRSGVLKHYPSVLHSEDALEGPQAFAEKRDPVWKGR</sequence>
<reference key="1">
    <citation type="journal article" date="2009" name="BMC Genomics">
        <title>Pseudogene accumulation in the evolutionary histories of Salmonella enterica serovars Paratyphi A and Typhi.</title>
        <authorList>
            <person name="Holt K.E."/>
            <person name="Thomson N.R."/>
            <person name="Wain J."/>
            <person name="Langridge G.C."/>
            <person name="Hasan R."/>
            <person name="Bhutta Z.A."/>
            <person name="Quail M.A."/>
            <person name="Norbertczak H."/>
            <person name="Walker D."/>
            <person name="Simmonds M."/>
            <person name="White B."/>
            <person name="Bason N."/>
            <person name="Mungall K."/>
            <person name="Dougan G."/>
            <person name="Parkhill J."/>
        </authorList>
    </citation>
    <scope>NUCLEOTIDE SEQUENCE [LARGE SCALE GENOMIC DNA]</scope>
    <source>
        <strain>AKU_12601</strain>
    </source>
</reference>
<dbReference type="EC" id="4.2.1.149" evidence="1"/>
<dbReference type="EMBL" id="FM200053">
    <property type="protein sequence ID" value="CAR58178.1"/>
    <property type="molecule type" value="Genomic_DNA"/>
</dbReference>
<dbReference type="RefSeq" id="WP_000004376.1">
    <property type="nucleotide sequence ID" value="NC_011147.1"/>
</dbReference>
<dbReference type="SMR" id="B5BL54"/>
<dbReference type="KEGG" id="sek:SSPA0067"/>
<dbReference type="HOGENOM" id="CLU_009834_7_6_6"/>
<dbReference type="UniPathway" id="UPA00117"/>
<dbReference type="Proteomes" id="UP000001869">
    <property type="component" value="Chromosome"/>
</dbReference>
<dbReference type="GO" id="GO:0016836">
    <property type="term" value="F:hydro-lyase activity"/>
    <property type="evidence" value="ECO:0007669"/>
    <property type="project" value="UniProtKB-UniRule"/>
</dbReference>
<dbReference type="GO" id="GO:0008735">
    <property type="term" value="F:L-carnitine CoA-transferase activity"/>
    <property type="evidence" value="ECO:0007669"/>
    <property type="project" value="RHEA"/>
</dbReference>
<dbReference type="GO" id="GO:0009437">
    <property type="term" value="P:carnitine metabolic process"/>
    <property type="evidence" value="ECO:0007669"/>
    <property type="project" value="UniProtKB-UniRule"/>
</dbReference>
<dbReference type="GO" id="GO:0006635">
    <property type="term" value="P:fatty acid beta-oxidation"/>
    <property type="evidence" value="ECO:0007669"/>
    <property type="project" value="TreeGrafter"/>
</dbReference>
<dbReference type="CDD" id="cd06558">
    <property type="entry name" value="crotonase-like"/>
    <property type="match status" value="1"/>
</dbReference>
<dbReference type="FunFam" id="1.10.12.10:FF:000005">
    <property type="entry name" value="Carnitinyl-CoA dehydratase"/>
    <property type="match status" value="1"/>
</dbReference>
<dbReference type="FunFam" id="3.90.226.10:FF:000009">
    <property type="entry name" value="Carnitinyl-CoA dehydratase"/>
    <property type="match status" value="1"/>
</dbReference>
<dbReference type="Gene3D" id="3.90.226.10">
    <property type="entry name" value="2-enoyl-CoA Hydratase, Chain A, domain 1"/>
    <property type="match status" value="1"/>
</dbReference>
<dbReference type="Gene3D" id="1.10.12.10">
    <property type="entry name" value="Lyase 2-enoyl-coa Hydratase, Chain A, domain 2"/>
    <property type="match status" value="1"/>
</dbReference>
<dbReference type="HAMAP" id="MF_01051">
    <property type="entry name" value="CaiD"/>
    <property type="match status" value="1"/>
</dbReference>
<dbReference type="InterPro" id="IPR022852">
    <property type="entry name" value="Carnitinyl_CoA_dehydratase"/>
</dbReference>
<dbReference type="InterPro" id="IPR029045">
    <property type="entry name" value="ClpP/crotonase-like_dom_sf"/>
</dbReference>
<dbReference type="InterPro" id="IPR018376">
    <property type="entry name" value="Enoyl-CoA_hyd/isom_CS"/>
</dbReference>
<dbReference type="InterPro" id="IPR001753">
    <property type="entry name" value="Enoyl-CoA_hydra/iso"/>
</dbReference>
<dbReference type="InterPro" id="IPR014748">
    <property type="entry name" value="Enoyl-CoA_hydra_C"/>
</dbReference>
<dbReference type="NCBIfam" id="NF002936">
    <property type="entry name" value="PRK03580.1"/>
    <property type="match status" value="1"/>
</dbReference>
<dbReference type="PANTHER" id="PTHR11941:SF54">
    <property type="entry name" value="ENOYL-COA HYDRATASE, MITOCHONDRIAL"/>
    <property type="match status" value="1"/>
</dbReference>
<dbReference type="PANTHER" id="PTHR11941">
    <property type="entry name" value="ENOYL-COA HYDRATASE-RELATED"/>
    <property type="match status" value="1"/>
</dbReference>
<dbReference type="Pfam" id="PF00378">
    <property type="entry name" value="ECH_1"/>
    <property type="match status" value="1"/>
</dbReference>
<dbReference type="SUPFAM" id="SSF52096">
    <property type="entry name" value="ClpP/crotonase"/>
    <property type="match status" value="1"/>
</dbReference>
<dbReference type="PROSITE" id="PS00166">
    <property type="entry name" value="ENOYL_COA_HYDRATASE"/>
    <property type="match status" value="1"/>
</dbReference>
<proteinExistence type="inferred from homology"/>
<accession>B5BL54</accession>
<keyword id="KW-0456">Lyase</keyword>
<gene>
    <name evidence="1" type="primary">caiD</name>
    <name type="ordered locus">SSPA0067</name>
</gene>